<proteinExistence type="inferred from homology"/>
<protein>
    <recommendedName>
        <fullName evidence="1">Elongation factor P-like protein</fullName>
    </recommendedName>
</protein>
<feature type="chain" id="PRO_1000130933" description="Elongation factor P-like protein">
    <location>
        <begin position="1"/>
        <end position="190"/>
    </location>
</feature>
<comment type="similarity">
    <text evidence="1">Belongs to the elongation factor P family.</text>
</comment>
<gene>
    <name type="ordered locus">YPTS_1408</name>
</gene>
<sequence>MAKANEIKRGMAVNLNGKLLLVKDIDVQSPSARGASTLYKMRFSDVRTGLKVEERFKGDENLDTITLTRRAVNFSYIDGDEYVFMDDEDYTPYNFKKEQIEDELLFIPEGGMPGMQVLTMEGQLLALELPQTVDMEIVDTAPSIKGASASARNKPAIMSTGLSIQVPEYISPGEKIRIHIAERRYMGRAD</sequence>
<reference key="1">
    <citation type="submission" date="2008-04" db="EMBL/GenBank/DDBJ databases">
        <title>Complete sequence of Yersinia pseudotuberculosis PB1/+.</title>
        <authorList>
            <person name="Copeland A."/>
            <person name="Lucas S."/>
            <person name="Lapidus A."/>
            <person name="Glavina del Rio T."/>
            <person name="Dalin E."/>
            <person name="Tice H."/>
            <person name="Bruce D."/>
            <person name="Goodwin L."/>
            <person name="Pitluck S."/>
            <person name="Munk A.C."/>
            <person name="Brettin T."/>
            <person name="Detter J.C."/>
            <person name="Han C."/>
            <person name="Tapia R."/>
            <person name="Schmutz J."/>
            <person name="Larimer F."/>
            <person name="Land M."/>
            <person name="Hauser L."/>
            <person name="Challacombe J.F."/>
            <person name="Green L."/>
            <person name="Lindler L.E."/>
            <person name="Nikolich M.P."/>
            <person name="Richardson P."/>
        </authorList>
    </citation>
    <scope>NUCLEOTIDE SEQUENCE [LARGE SCALE GENOMIC DNA]</scope>
    <source>
        <strain>PB1/+</strain>
    </source>
</reference>
<dbReference type="EMBL" id="CP001048">
    <property type="protein sequence ID" value="ACC88382.1"/>
    <property type="molecule type" value="Genomic_DNA"/>
</dbReference>
<dbReference type="SMR" id="B2K9G9"/>
<dbReference type="KEGG" id="ypb:YPTS_1408"/>
<dbReference type="PATRIC" id="fig|502801.10.peg.765"/>
<dbReference type="GO" id="GO:0005737">
    <property type="term" value="C:cytoplasm"/>
    <property type="evidence" value="ECO:0007669"/>
    <property type="project" value="InterPro"/>
</dbReference>
<dbReference type="GO" id="GO:0003746">
    <property type="term" value="F:translation elongation factor activity"/>
    <property type="evidence" value="ECO:0007669"/>
    <property type="project" value="UniProtKB-UniRule"/>
</dbReference>
<dbReference type="GO" id="GO:0043043">
    <property type="term" value="P:peptide biosynthetic process"/>
    <property type="evidence" value="ECO:0007669"/>
    <property type="project" value="InterPro"/>
</dbReference>
<dbReference type="CDD" id="cd04470">
    <property type="entry name" value="S1_EF-P_repeat_1"/>
    <property type="match status" value="1"/>
</dbReference>
<dbReference type="CDD" id="cd05794">
    <property type="entry name" value="S1_EF-P_repeat_2"/>
    <property type="match status" value="1"/>
</dbReference>
<dbReference type="FunFam" id="2.40.50.140:FF:000004">
    <property type="entry name" value="Elongation factor P"/>
    <property type="match status" value="1"/>
</dbReference>
<dbReference type="FunFam" id="2.30.30.30:FF:000011">
    <property type="entry name" value="Elongation factor P-like protein"/>
    <property type="match status" value="1"/>
</dbReference>
<dbReference type="FunFam" id="2.40.50.140:FF:000053">
    <property type="entry name" value="Elongation factor P-like protein"/>
    <property type="match status" value="1"/>
</dbReference>
<dbReference type="Gene3D" id="2.30.30.30">
    <property type="match status" value="1"/>
</dbReference>
<dbReference type="Gene3D" id="2.40.50.140">
    <property type="entry name" value="Nucleic acid-binding proteins"/>
    <property type="match status" value="2"/>
</dbReference>
<dbReference type="HAMAP" id="MF_00646">
    <property type="entry name" value="EFP"/>
    <property type="match status" value="1"/>
</dbReference>
<dbReference type="InterPro" id="IPR015365">
    <property type="entry name" value="Elong-fact-P_C"/>
</dbReference>
<dbReference type="InterPro" id="IPR012340">
    <property type="entry name" value="NA-bd_OB-fold"/>
</dbReference>
<dbReference type="InterPro" id="IPR014722">
    <property type="entry name" value="Rib_uL2_dom2"/>
</dbReference>
<dbReference type="InterPro" id="IPR020599">
    <property type="entry name" value="Transl_elong_fac_P/YeiP"/>
</dbReference>
<dbReference type="InterPro" id="IPR013185">
    <property type="entry name" value="Transl_elong_KOW-like"/>
</dbReference>
<dbReference type="InterPro" id="IPR011897">
    <property type="entry name" value="Transl_elong_p-like_YeiP"/>
</dbReference>
<dbReference type="InterPro" id="IPR001059">
    <property type="entry name" value="Transl_elong_P/YeiP_cen"/>
</dbReference>
<dbReference type="InterPro" id="IPR013852">
    <property type="entry name" value="Transl_elong_P/YeiP_CS"/>
</dbReference>
<dbReference type="InterPro" id="IPR008991">
    <property type="entry name" value="Translation_prot_SH3-like_sf"/>
</dbReference>
<dbReference type="NCBIfam" id="NF001810">
    <property type="entry name" value="PRK00529.1"/>
    <property type="match status" value="1"/>
</dbReference>
<dbReference type="NCBIfam" id="NF003392">
    <property type="entry name" value="PRK04542.1"/>
    <property type="match status" value="1"/>
</dbReference>
<dbReference type="NCBIfam" id="TIGR02178">
    <property type="entry name" value="yeiP"/>
    <property type="match status" value="1"/>
</dbReference>
<dbReference type="PANTHER" id="PTHR30053">
    <property type="entry name" value="ELONGATION FACTOR P"/>
    <property type="match status" value="1"/>
</dbReference>
<dbReference type="PANTHER" id="PTHR30053:SF14">
    <property type="entry name" value="TRANSLATION ELONGATION FACTOR KOW-LIKE DOMAIN-CONTAINING PROTEIN"/>
    <property type="match status" value="1"/>
</dbReference>
<dbReference type="Pfam" id="PF01132">
    <property type="entry name" value="EFP"/>
    <property type="match status" value="1"/>
</dbReference>
<dbReference type="Pfam" id="PF08207">
    <property type="entry name" value="EFP_N"/>
    <property type="match status" value="1"/>
</dbReference>
<dbReference type="Pfam" id="PF09285">
    <property type="entry name" value="Elong-fact-P_C"/>
    <property type="match status" value="1"/>
</dbReference>
<dbReference type="PIRSF" id="PIRSF005901">
    <property type="entry name" value="EF-P"/>
    <property type="match status" value="1"/>
</dbReference>
<dbReference type="SMART" id="SM01185">
    <property type="entry name" value="EFP"/>
    <property type="match status" value="1"/>
</dbReference>
<dbReference type="SMART" id="SM00841">
    <property type="entry name" value="Elong-fact-P_C"/>
    <property type="match status" value="1"/>
</dbReference>
<dbReference type="SUPFAM" id="SSF50249">
    <property type="entry name" value="Nucleic acid-binding proteins"/>
    <property type="match status" value="2"/>
</dbReference>
<dbReference type="SUPFAM" id="SSF50104">
    <property type="entry name" value="Translation proteins SH3-like domain"/>
    <property type="match status" value="1"/>
</dbReference>
<dbReference type="PROSITE" id="PS01275">
    <property type="entry name" value="EFP"/>
    <property type="match status" value="1"/>
</dbReference>
<evidence type="ECO:0000255" key="1">
    <source>
        <dbReference type="HAMAP-Rule" id="MF_00646"/>
    </source>
</evidence>
<name>EFPL_YERPB</name>
<organism>
    <name type="scientific">Yersinia pseudotuberculosis serotype IB (strain PB1/+)</name>
    <dbReference type="NCBI Taxonomy" id="502801"/>
    <lineage>
        <taxon>Bacteria</taxon>
        <taxon>Pseudomonadati</taxon>
        <taxon>Pseudomonadota</taxon>
        <taxon>Gammaproteobacteria</taxon>
        <taxon>Enterobacterales</taxon>
        <taxon>Yersiniaceae</taxon>
        <taxon>Yersinia</taxon>
    </lineage>
</organism>
<accession>B2K9G9</accession>